<protein>
    <recommendedName>
        <fullName evidence="2">Photosystem I assembly protein Ycf3</fullName>
    </recommendedName>
</protein>
<evidence type="ECO:0000250" key="1"/>
<evidence type="ECO:0000255" key="2">
    <source>
        <dbReference type="HAMAP-Rule" id="MF_00439"/>
    </source>
</evidence>
<gene>
    <name evidence="2" type="primary">ycf3</name>
</gene>
<comment type="function">
    <text evidence="2">Essential for the assembly of the photosystem I (PSI) complex. May act as a chaperone-like factor to guide the assembly of the PSI subunits.</text>
</comment>
<comment type="subcellular location">
    <subcellularLocation>
        <location evidence="2">Plastid</location>
        <location evidence="2">Chloroplast thylakoid membrane</location>
        <topology evidence="2">Peripheral membrane protein</topology>
    </subcellularLocation>
</comment>
<comment type="RNA editing">
    <location>
        <position position="62" evidence="1"/>
    </location>
</comment>
<comment type="similarity">
    <text evidence="2">Belongs to the Ycf3 family.</text>
</comment>
<organism>
    <name type="scientific">Triticum aestivum</name>
    <name type="common">Wheat</name>
    <dbReference type="NCBI Taxonomy" id="4565"/>
    <lineage>
        <taxon>Eukaryota</taxon>
        <taxon>Viridiplantae</taxon>
        <taxon>Streptophyta</taxon>
        <taxon>Embryophyta</taxon>
        <taxon>Tracheophyta</taxon>
        <taxon>Spermatophyta</taxon>
        <taxon>Magnoliopsida</taxon>
        <taxon>Liliopsida</taxon>
        <taxon>Poales</taxon>
        <taxon>Poaceae</taxon>
        <taxon>BOP clade</taxon>
        <taxon>Pooideae</taxon>
        <taxon>Triticodae</taxon>
        <taxon>Triticeae</taxon>
        <taxon>Triticinae</taxon>
        <taxon>Triticum</taxon>
    </lineage>
</organism>
<dbReference type="EMBL" id="AB042240">
    <property type="protein sequence ID" value="BAB47035.1"/>
    <property type="molecule type" value="Genomic_DNA"/>
</dbReference>
<dbReference type="RefSeq" id="NP_114260.1">
    <property type="nucleotide sequence ID" value="NC_002762.1"/>
</dbReference>
<dbReference type="SMR" id="P58257"/>
<dbReference type="STRING" id="4565.P58257"/>
<dbReference type="GeneID" id="803204"/>
<dbReference type="KEGG" id="taes:803204"/>
<dbReference type="eggNOG" id="KOG1124">
    <property type="taxonomic scope" value="Eukaryota"/>
</dbReference>
<dbReference type="Proteomes" id="UP000019116">
    <property type="component" value="Chloroplast"/>
</dbReference>
<dbReference type="GO" id="GO:0009535">
    <property type="term" value="C:chloroplast thylakoid membrane"/>
    <property type="evidence" value="ECO:0007669"/>
    <property type="project" value="UniProtKB-SubCell"/>
</dbReference>
<dbReference type="GO" id="GO:0048564">
    <property type="term" value="P:photosystem I assembly"/>
    <property type="evidence" value="ECO:0000318"/>
    <property type="project" value="GO_Central"/>
</dbReference>
<dbReference type="FunFam" id="1.25.40.10:FF:000004">
    <property type="entry name" value="Photosystem I assembly protein Ycf3"/>
    <property type="match status" value="1"/>
</dbReference>
<dbReference type="Gene3D" id="1.25.40.10">
    <property type="entry name" value="Tetratricopeptide repeat domain"/>
    <property type="match status" value="1"/>
</dbReference>
<dbReference type="HAMAP" id="MF_00439">
    <property type="entry name" value="Ycf3"/>
    <property type="match status" value="1"/>
</dbReference>
<dbReference type="InterPro" id="IPR022818">
    <property type="entry name" value="PSI_Ycf3_assembly"/>
</dbReference>
<dbReference type="InterPro" id="IPR011990">
    <property type="entry name" value="TPR-like_helical_dom_sf"/>
</dbReference>
<dbReference type="InterPro" id="IPR019734">
    <property type="entry name" value="TPR_rpt"/>
</dbReference>
<dbReference type="InterPro" id="IPR051685">
    <property type="entry name" value="Ycf3/AcsC/BcsC/TPR_MFPF"/>
</dbReference>
<dbReference type="NCBIfam" id="NF002725">
    <property type="entry name" value="PRK02603.1"/>
    <property type="match status" value="1"/>
</dbReference>
<dbReference type="PANTHER" id="PTHR44943">
    <property type="entry name" value="CELLULOSE SYNTHASE OPERON PROTEIN C"/>
    <property type="match status" value="1"/>
</dbReference>
<dbReference type="PANTHER" id="PTHR44943:SF8">
    <property type="entry name" value="TPR REPEAT-CONTAINING PROTEIN MJ0263"/>
    <property type="match status" value="1"/>
</dbReference>
<dbReference type="Pfam" id="PF00515">
    <property type="entry name" value="TPR_1"/>
    <property type="match status" value="1"/>
</dbReference>
<dbReference type="SMART" id="SM00028">
    <property type="entry name" value="TPR"/>
    <property type="match status" value="3"/>
</dbReference>
<dbReference type="SUPFAM" id="SSF48452">
    <property type="entry name" value="TPR-like"/>
    <property type="match status" value="1"/>
</dbReference>
<dbReference type="PROSITE" id="PS50005">
    <property type="entry name" value="TPR"/>
    <property type="match status" value="3"/>
</dbReference>
<dbReference type="PROSITE" id="PS50293">
    <property type="entry name" value="TPR_REGION"/>
    <property type="match status" value="1"/>
</dbReference>
<feature type="chain" id="PRO_0000217826" description="Photosystem I assembly protein Ycf3">
    <location>
        <begin position="1"/>
        <end position="170"/>
    </location>
</feature>
<feature type="repeat" description="TPR 1">
    <location>
        <begin position="35"/>
        <end position="68"/>
    </location>
</feature>
<feature type="repeat" description="TPR 2">
    <location>
        <begin position="72"/>
        <end position="105"/>
    </location>
</feature>
<feature type="repeat" description="TPR 3">
    <location>
        <begin position="120"/>
        <end position="153"/>
    </location>
</feature>
<sequence>MPRSRVNGNFIDKTSSIVANILLRIIPTTSGEKKAFTYYRDGMLAQSEGNYAEALQNYYEAMRLEIDPYDRSYILYNIGLIHTSNGEHTKALEYYFRALERNPFLPQAFNNMAVICHYRGEQAILQGDSEIAEAWFDQAAEYWKQAIALTPGNYIEAQNWLKITKRFEFE</sequence>
<accession>P58257</accession>
<name>YCF3_WHEAT</name>
<proteinExistence type="inferred from homology"/>
<reference key="1">
    <citation type="journal article" date="2000" name="Plant Mol. Biol. Rep.">
        <title>Chinese spring wheat (Triticum aestivum L.) chloroplast genome: complete sequence and contig clones.</title>
        <authorList>
            <person name="Ogihara Y."/>
            <person name="Isono K."/>
            <person name="Kojima T."/>
            <person name="Endo A."/>
            <person name="Hanaoka M."/>
            <person name="Shiina T."/>
            <person name="Terachi T."/>
            <person name="Utsugi S."/>
            <person name="Murata M."/>
            <person name="Mori N."/>
            <person name="Takumi S."/>
            <person name="Ikeo K."/>
            <person name="Gojobori T."/>
            <person name="Murai R."/>
            <person name="Murai K."/>
            <person name="Matsuoka Y."/>
            <person name="Ohnishi Y."/>
            <person name="Tajiri H."/>
            <person name="Tsunewaki K."/>
        </authorList>
    </citation>
    <scope>NUCLEOTIDE SEQUENCE [LARGE SCALE GENOMIC DNA]</scope>
    <source>
        <strain>cv. Chinese Spring</strain>
    </source>
</reference>
<keyword id="KW-0150">Chloroplast</keyword>
<keyword id="KW-0472">Membrane</keyword>
<keyword id="KW-0602">Photosynthesis</keyword>
<keyword id="KW-0934">Plastid</keyword>
<keyword id="KW-1185">Reference proteome</keyword>
<keyword id="KW-0677">Repeat</keyword>
<keyword id="KW-0691">RNA editing</keyword>
<keyword id="KW-0793">Thylakoid</keyword>
<keyword id="KW-0802">TPR repeat</keyword>
<geneLocation type="chloroplast"/>